<protein>
    <recommendedName>
        <fullName evidence="1">Phenylalanine--tRNA ligase beta subunit</fullName>
        <ecNumber evidence="1">6.1.1.20</ecNumber>
    </recommendedName>
    <alternativeName>
        <fullName evidence="1">Phenylalanyl-tRNA synthetase beta subunit</fullName>
        <shortName evidence="1">PheRS</shortName>
    </alternativeName>
</protein>
<keyword id="KW-0030">Aminoacyl-tRNA synthetase</keyword>
<keyword id="KW-0067">ATP-binding</keyword>
<keyword id="KW-0963">Cytoplasm</keyword>
<keyword id="KW-0436">Ligase</keyword>
<keyword id="KW-0460">Magnesium</keyword>
<keyword id="KW-0479">Metal-binding</keyword>
<keyword id="KW-0547">Nucleotide-binding</keyword>
<keyword id="KW-0648">Protein biosynthesis</keyword>
<keyword id="KW-0694">RNA-binding</keyword>
<keyword id="KW-0820">tRNA-binding</keyword>
<feature type="chain" id="PRO_0000232050" description="Phenylalanine--tRNA ligase beta subunit">
    <location>
        <begin position="1"/>
        <end position="809"/>
    </location>
</feature>
<feature type="domain" description="tRNA-binding" evidence="1">
    <location>
        <begin position="39"/>
        <end position="154"/>
    </location>
</feature>
<feature type="domain" description="B5" evidence="1">
    <location>
        <begin position="405"/>
        <end position="480"/>
    </location>
</feature>
<feature type="domain" description="FDX-ACB" evidence="1">
    <location>
        <begin position="707"/>
        <end position="808"/>
    </location>
</feature>
<feature type="binding site" evidence="1">
    <location>
        <position position="458"/>
    </location>
    <ligand>
        <name>Mg(2+)</name>
        <dbReference type="ChEBI" id="CHEBI:18420"/>
        <note>shared with alpha subunit</note>
    </ligand>
</feature>
<feature type="binding site" evidence="1">
    <location>
        <position position="464"/>
    </location>
    <ligand>
        <name>Mg(2+)</name>
        <dbReference type="ChEBI" id="CHEBI:18420"/>
        <note>shared with alpha subunit</note>
    </ligand>
</feature>
<feature type="binding site" evidence="1">
    <location>
        <position position="467"/>
    </location>
    <ligand>
        <name>Mg(2+)</name>
        <dbReference type="ChEBI" id="CHEBI:18420"/>
        <note>shared with alpha subunit</note>
    </ligand>
</feature>
<feature type="binding site" evidence="1">
    <location>
        <position position="468"/>
    </location>
    <ligand>
        <name>Mg(2+)</name>
        <dbReference type="ChEBI" id="CHEBI:18420"/>
        <note>shared with alpha subunit</note>
    </ligand>
</feature>
<reference key="1">
    <citation type="submission" date="2005-10" db="EMBL/GenBank/DDBJ databases">
        <title>Complete sequence of chromosome 1 of Burkholderia sp. 383.</title>
        <authorList>
            <consortium name="US DOE Joint Genome Institute"/>
            <person name="Copeland A."/>
            <person name="Lucas S."/>
            <person name="Lapidus A."/>
            <person name="Barry K."/>
            <person name="Detter J.C."/>
            <person name="Glavina T."/>
            <person name="Hammon N."/>
            <person name="Israni S."/>
            <person name="Pitluck S."/>
            <person name="Chain P."/>
            <person name="Malfatti S."/>
            <person name="Shin M."/>
            <person name="Vergez L."/>
            <person name="Schmutz J."/>
            <person name="Larimer F."/>
            <person name="Land M."/>
            <person name="Kyrpides N."/>
            <person name="Lykidis A."/>
            <person name="Richardson P."/>
        </authorList>
    </citation>
    <scope>NUCLEOTIDE SEQUENCE [LARGE SCALE GENOMIC DNA]</scope>
    <source>
        <strain>ATCC 17760 / DSM 23089 / LMG 22485 / NCIMB 9086 / R18194 / 383</strain>
    </source>
</reference>
<proteinExistence type="inferred from homology"/>
<dbReference type="EC" id="6.1.1.20" evidence="1"/>
<dbReference type="EMBL" id="CP000151">
    <property type="protein sequence ID" value="ABB08216.1"/>
    <property type="molecule type" value="Genomic_DNA"/>
</dbReference>
<dbReference type="RefSeq" id="WP_011351780.1">
    <property type="nucleotide sequence ID" value="NC_007510.1"/>
</dbReference>
<dbReference type="SMR" id="Q39H50"/>
<dbReference type="GeneID" id="45094515"/>
<dbReference type="KEGG" id="bur:Bcep18194_A4620"/>
<dbReference type="PATRIC" id="fig|482957.22.peg.1525"/>
<dbReference type="HOGENOM" id="CLU_016891_0_0_4"/>
<dbReference type="Proteomes" id="UP000002705">
    <property type="component" value="Chromosome 1"/>
</dbReference>
<dbReference type="GO" id="GO:0009328">
    <property type="term" value="C:phenylalanine-tRNA ligase complex"/>
    <property type="evidence" value="ECO:0007669"/>
    <property type="project" value="TreeGrafter"/>
</dbReference>
<dbReference type="GO" id="GO:0005524">
    <property type="term" value="F:ATP binding"/>
    <property type="evidence" value="ECO:0007669"/>
    <property type="project" value="UniProtKB-UniRule"/>
</dbReference>
<dbReference type="GO" id="GO:0000287">
    <property type="term" value="F:magnesium ion binding"/>
    <property type="evidence" value="ECO:0007669"/>
    <property type="project" value="UniProtKB-UniRule"/>
</dbReference>
<dbReference type="GO" id="GO:0004826">
    <property type="term" value="F:phenylalanine-tRNA ligase activity"/>
    <property type="evidence" value="ECO:0007669"/>
    <property type="project" value="UniProtKB-UniRule"/>
</dbReference>
<dbReference type="GO" id="GO:0000049">
    <property type="term" value="F:tRNA binding"/>
    <property type="evidence" value="ECO:0007669"/>
    <property type="project" value="UniProtKB-KW"/>
</dbReference>
<dbReference type="GO" id="GO:0006432">
    <property type="term" value="P:phenylalanyl-tRNA aminoacylation"/>
    <property type="evidence" value="ECO:0007669"/>
    <property type="project" value="UniProtKB-UniRule"/>
</dbReference>
<dbReference type="CDD" id="cd00769">
    <property type="entry name" value="PheRS_beta_core"/>
    <property type="match status" value="1"/>
</dbReference>
<dbReference type="CDD" id="cd02796">
    <property type="entry name" value="tRNA_bind_bactPheRS"/>
    <property type="match status" value="1"/>
</dbReference>
<dbReference type="FunFam" id="2.40.50.140:FF:000045">
    <property type="entry name" value="Phenylalanine--tRNA ligase beta subunit"/>
    <property type="match status" value="1"/>
</dbReference>
<dbReference type="FunFam" id="3.30.56.10:FF:000002">
    <property type="entry name" value="Phenylalanine--tRNA ligase beta subunit"/>
    <property type="match status" value="1"/>
</dbReference>
<dbReference type="FunFam" id="3.30.930.10:FF:000022">
    <property type="entry name" value="Phenylalanine--tRNA ligase beta subunit"/>
    <property type="match status" value="1"/>
</dbReference>
<dbReference type="Gene3D" id="3.30.56.10">
    <property type="match status" value="2"/>
</dbReference>
<dbReference type="Gene3D" id="3.30.930.10">
    <property type="entry name" value="Bira Bifunctional Protein, Domain 2"/>
    <property type="match status" value="1"/>
</dbReference>
<dbReference type="Gene3D" id="3.30.70.380">
    <property type="entry name" value="Ferrodoxin-fold anticodon-binding domain"/>
    <property type="match status" value="1"/>
</dbReference>
<dbReference type="Gene3D" id="2.40.50.140">
    <property type="entry name" value="Nucleic acid-binding proteins"/>
    <property type="match status" value="1"/>
</dbReference>
<dbReference type="Gene3D" id="3.50.40.10">
    <property type="entry name" value="Phenylalanyl-trna Synthetase, Chain B, domain 3"/>
    <property type="match status" value="1"/>
</dbReference>
<dbReference type="HAMAP" id="MF_00283">
    <property type="entry name" value="Phe_tRNA_synth_beta1"/>
    <property type="match status" value="1"/>
</dbReference>
<dbReference type="InterPro" id="IPR045864">
    <property type="entry name" value="aa-tRNA-synth_II/BPL/LPL"/>
</dbReference>
<dbReference type="InterPro" id="IPR005146">
    <property type="entry name" value="B3/B4_tRNA-bd"/>
</dbReference>
<dbReference type="InterPro" id="IPR009061">
    <property type="entry name" value="DNA-bd_dom_put_sf"/>
</dbReference>
<dbReference type="InterPro" id="IPR005121">
    <property type="entry name" value="Fdx_antiC-bd"/>
</dbReference>
<dbReference type="InterPro" id="IPR036690">
    <property type="entry name" value="Fdx_antiC-bd_sf"/>
</dbReference>
<dbReference type="InterPro" id="IPR012340">
    <property type="entry name" value="NA-bd_OB-fold"/>
</dbReference>
<dbReference type="InterPro" id="IPR045060">
    <property type="entry name" value="Phe-tRNA-ligase_IIc_bsu"/>
</dbReference>
<dbReference type="InterPro" id="IPR004532">
    <property type="entry name" value="Phe-tRNA-ligase_IIc_bsu_bact"/>
</dbReference>
<dbReference type="InterPro" id="IPR020825">
    <property type="entry name" value="Phe-tRNA_synthase-like_B3/B4"/>
</dbReference>
<dbReference type="InterPro" id="IPR041616">
    <property type="entry name" value="PheRS_beta_core"/>
</dbReference>
<dbReference type="InterPro" id="IPR002547">
    <property type="entry name" value="tRNA-bd_dom"/>
</dbReference>
<dbReference type="InterPro" id="IPR033714">
    <property type="entry name" value="tRNA_bind_bactPheRS"/>
</dbReference>
<dbReference type="InterPro" id="IPR005147">
    <property type="entry name" value="tRNA_synthase_B5-dom"/>
</dbReference>
<dbReference type="NCBIfam" id="TIGR00472">
    <property type="entry name" value="pheT_bact"/>
    <property type="match status" value="1"/>
</dbReference>
<dbReference type="NCBIfam" id="NF045760">
    <property type="entry name" value="YtpR"/>
    <property type="match status" value="1"/>
</dbReference>
<dbReference type="PANTHER" id="PTHR10947:SF0">
    <property type="entry name" value="PHENYLALANINE--TRNA LIGASE BETA SUBUNIT"/>
    <property type="match status" value="1"/>
</dbReference>
<dbReference type="PANTHER" id="PTHR10947">
    <property type="entry name" value="PHENYLALANYL-TRNA SYNTHETASE BETA CHAIN AND LEUCINE-RICH REPEAT-CONTAINING PROTEIN 47"/>
    <property type="match status" value="1"/>
</dbReference>
<dbReference type="Pfam" id="PF03483">
    <property type="entry name" value="B3_4"/>
    <property type="match status" value="1"/>
</dbReference>
<dbReference type="Pfam" id="PF03484">
    <property type="entry name" value="B5"/>
    <property type="match status" value="1"/>
</dbReference>
<dbReference type="Pfam" id="PF03147">
    <property type="entry name" value="FDX-ACB"/>
    <property type="match status" value="1"/>
</dbReference>
<dbReference type="Pfam" id="PF01588">
    <property type="entry name" value="tRNA_bind"/>
    <property type="match status" value="1"/>
</dbReference>
<dbReference type="Pfam" id="PF17759">
    <property type="entry name" value="tRNA_synthFbeta"/>
    <property type="match status" value="1"/>
</dbReference>
<dbReference type="SMART" id="SM00873">
    <property type="entry name" value="B3_4"/>
    <property type="match status" value="1"/>
</dbReference>
<dbReference type="SMART" id="SM00874">
    <property type="entry name" value="B5"/>
    <property type="match status" value="1"/>
</dbReference>
<dbReference type="SMART" id="SM00896">
    <property type="entry name" value="FDX-ACB"/>
    <property type="match status" value="1"/>
</dbReference>
<dbReference type="SUPFAM" id="SSF54991">
    <property type="entry name" value="Anticodon-binding domain of PheRS"/>
    <property type="match status" value="1"/>
</dbReference>
<dbReference type="SUPFAM" id="SSF55681">
    <property type="entry name" value="Class II aaRS and biotin synthetases"/>
    <property type="match status" value="1"/>
</dbReference>
<dbReference type="SUPFAM" id="SSF50249">
    <property type="entry name" value="Nucleic acid-binding proteins"/>
    <property type="match status" value="1"/>
</dbReference>
<dbReference type="SUPFAM" id="SSF56037">
    <property type="entry name" value="PheT/TilS domain"/>
    <property type="match status" value="1"/>
</dbReference>
<dbReference type="SUPFAM" id="SSF46955">
    <property type="entry name" value="Putative DNA-binding domain"/>
    <property type="match status" value="1"/>
</dbReference>
<dbReference type="PROSITE" id="PS51483">
    <property type="entry name" value="B5"/>
    <property type="match status" value="1"/>
</dbReference>
<dbReference type="PROSITE" id="PS51447">
    <property type="entry name" value="FDX_ACB"/>
    <property type="match status" value="1"/>
</dbReference>
<dbReference type="PROSITE" id="PS50886">
    <property type="entry name" value="TRBD"/>
    <property type="match status" value="1"/>
</dbReference>
<evidence type="ECO:0000255" key="1">
    <source>
        <dbReference type="HAMAP-Rule" id="MF_00283"/>
    </source>
</evidence>
<accession>Q39H50</accession>
<comment type="catalytic activity">
    <reaction evidence="1">
        <text>tRNA(Phe) + L-phenylalanine + ATP = L-phenylalanyl-tRNA(Phe) + AMP + diphosphate + H(+)</text>
        <dbReference type="Rhea" id="RHEA:19413"/>
        <dbReference type="Rhea" id="RHEA-COMP:9668"/>
        <dbReference type="Rhea" id="RHEA-COMP:9699"/>
        <dbReference type="ChEBI" id="CHEBI:15378"/>
        <dbReference type="ChEBI" id="CHEBI:30616"/>
        <dbReference type="ChEBI" id="CHEBI:33019"/>
        <dbReference type="ChEBI" id="CHEBI:58095"/>
        <dbReference type="ChEBI" id="CHEBI:78442"/>
        <dbReference type="ChEBI" id="CHEBI:78531"/>
        <dbReference type="ChEBI" id="CHEBI:456215"/>
        <dbReference type="EC" id="6.1.1.20"/>
    </reaction>
</comment>
<comment type="cofactor">
    <cofactor evidence="1">
        <name>Mg(2+)</name>
        <dbReference type="ChEBI" id="CHEBI:18420"/>
    </cofactor>
    <text evidence="1">Binds 2 magnesium ions per tetramer.</text>
</comment>
<comment type="subunit">
    <text evidence="1">Tetramer of two alpha and two beta subunits.</text>
</comment>
<comment type="subcellular location">
    <subcellularLocation>
        <location evidence="1">Cytoplasm</location>
    </subcellularLocation>
</comment>
<comment type="similarity">
    <text evidence="1">Belongs to the phenylalanyl-tRNA synthetase beta subunit family. Type 1 subfamily.</text>
</comment>
<gene>
    <name evidence="1" type="primary">pheT</name>
    <name type="ordered locus">Bcep18194_A4620</name>
</gene>
<sequence>MQFPESWLRTFVDPQLTTDELSHALTMAGLEVESLSKAAPPTSKIVVGRVLEVVKHPDADKLNVCQVDAGTGATLNIVCGAPNVAPGIKVPVALVGAELPPAEEGGKPFAIKLSKLRGVESQGMLCSARELKLSEDHSGLLVLPEDTPVGQDIRETLNLDDTIFEIKLTPNKADCLSVFGIARETAAITGAPLTPVDIRPVRVELDETLPVRIAAPDLCGRFSGRVIRGVNAHAKTPQWMVERLARSGQRSVSALVDISNYVMFELGRPSHVFDLDKIHGGIEVRWGKRGESLKLLNGNTVELDETVGVISDGRQVESLAGIMGGDSTAVTLDTTNIYLEAAFWWPDSIRGRARKYNFSTDAAHRFERGVDYATTVEHVERITQLILEICGGKAGPVDDQSVNLPQRAPVKMRVSRANRIIGVQIGADEIASIFTRLGLPFEREDDAFLVTPPSHRFDIEIEEDLIEEVARIYGFEKIPARPPVATSEMRATNETRRSIHDIRHALAARDYAETVNFSFVDAEWEQDFAGNDHPIRLLNPIASQLSVMRTTLFGSLISVLRHNLNRRADRVRLFEAGRVFLTDAASKAGELTVEGYVQPKRVGALAYGPALDEQWGAETRPVDFFDVKGDLEALLAPAAARFVKAEHPALHPGRSARIEVDGRAVGWIGELHPRLMQKYELPHAPVMFEVDADALIARALPAPTDVSKFPPVRRDIAVVVDQAVEVQALFDEMKKALAEEACRFVQKVVLFDEFRAKSNTSGGLAAHEKSLAFRVTLQDAAGTLQDEVVDQAIQTLVERMARAGARLRG</sequence>
<name>SYFB_BURL3</name>
<organism>
    <name type="scientific">Burkholderia lata (strain ATCC 17760 / DSM 23089 / LMG 22485 / NCIMB 9086 / R18194 / 383)</name>
    <dbReference type="NCBI Taxonomy" id="482957"/>
    <lineage>
        <taxon>Bacteria</taxon>
        <taxon>Pseudomonadati</taxon>
        <taxon>Pseudomonadota</taxon>
        <taxon>Betaproteobacteria</taxon>
        <taxon>Burkholderiales</taxon>
        <taxon>Burkholderiaceae</taxon>
        <taxon>Burkholderia</taxon>
        <taxon>Burkholderia cepacia complex</taxon>
    </lineage>
</organism>